<accession>Q15YU1</accession>
<sequence>MQYFPIFVDTKELNCLVVGAGEVAARKVELLLKTSATITVVAPWACDTVQRLADEGQVTLHTRGYESSDLTAKQLVFVATDDSQLNIDIHHQAKAQNILVNVVDNTPLCQFITPSIVDRSPIIIAMSSGGVAPVLLRYLRQKLESVIPQKVSLLGQFSEKFRETVKARFNSVTKRRYFWEDILDGDVAEQVLQGNNSKAEQMMQDKLALDEHDSGKGEVYLVGAGPGDPDLLTFRALRLMQKADVVVYDRLVSKEILELVRRDAEKIYVGKARSLHTVPQDEINALLADLALKGNRVVRLKGGDPFIFGRGGEEIETLVEKGVSFQVVPGITAASGAASYAGIPLTHRDHAKSVVFATGHLRDNSINLNWPMLAQPEQTTVFYMGLTGLPVICEKLIQHGLPDTTEIALVQSATTTEQKVVAGNLANIQQKVAEAGIKPPALIIVGSVVSLREKLNWFGADA</sequence>
<reference key="1">
    <citation type="submission" date="2006-06" db="EMBL/GenBank/DDBJ databases">
        <title>Complete sequence of Pseudoalteromonas atlantica T6c.</title>
        <authorList>
            <consortium name="US DOE Joint Genome Institute"/>
            <person name="Copeland A."/>
            <person name="Lucas S."/>
            <person name="Lapidus A."/>
            <person name="Barry K."/>
            <person name="Detter J.C."/>
            <person name="Glavina del Rio T."/>
            <person name="Hammon N."/>
            <person name="Israni S."/>
            <person name="Dalin E."/>
            <person name="Tice H."/>
            <person name="Pitluck S."/>
            <person name="Saunders E."/>
            <person name="Brettin T."/>
            <person name="Bruce D."/>
            <person name="Han C."/>
            <person name="Tapia R."/>
            <person name="Gilna P."/>
            <person name="Schmutz J."/>
            <person name="Larimer F."/>
            <person name="Land M."/>
            <person name="Hauser L."/>
            <person name="Kyrpides N."/>
            <person name="Kim E."/>
            <person name="Karls A.C."/>
            <person name="Bartlett D."/>
            <person name="Higgins B.P."/>
            <person name="Richardson P."/>
        </authorList>
    </citation>
    <scope>NUCLEOTIDE SEQUENCE [LARGE SCALE GENOMIC DNA]</scope>
    <source>
        <strain>T6c / ATCC BAA-1087</strain>
    </source>
</reference>
<keyword id="KW-0169">Cobalamin biosynthesis</keyword>
<keyword id="KW-0456">Lyase</keyword>
<keyword id="KW-0489">Methyltransferase</keyword>
<keyword id="KW-0511">Multifunctional enzyme</keyword>
<keyword id="KW-0520">NAD</keyword>
<keyword id="KW-0560">Oxidoreductase</keyword>
<keyword id="KW-0597">Phosphoprotein</keyword>
<keyword id="KW-0627">Porphyrin biosynthesis</keyword>
<keyword id="KW-0949">S-adenosyl-L-methionine</keyword>
<keyword id="KW-0808">Transferase</keyword>
<comment type="function">
    <text evidence="1">Multifunctional enzyme that catalyzes the SAM-dependent methylations of uroporphyrinogen III at position C-2 and C-7 to form precorrin-2 via precorrin-1. Then it catalyzes the NAD-dependent ring dehydrogenation of precorrin-2 to yield sirohydrochlorin. Finally, it catalyzes the ferrochelation of sirohydrochlorin to yield siroheme.</text>
</comment>
<comment type="catalytic activity">
    <reaction evidence="1">
        <text>uroporphyrinogen III + 2 S-adenosyl-L-methionine = precorrin-2 + 2 S-adenosyl-L-homocysteine + H(+)</text>
        <dbReference type="Rhea" id="RHEA:32459"/>
        <dbReference type="ChEBI" id="CHEBI:15378"/>
        <dbReference type="ChEBI" id="CHEBI:57308"/>
        <dbReference type="ChEBI" id="CHEBI:57856"/>
        <dbReference type="ChEBI" id="CHEBI:58827"/>
        <dbReference type="ChEBI" id="CHEBI:59789"/>
        <dbReference type="EC" id="2.1.1.107"/>
    </reaction>
</comment>
<comment type="catalytic activity">
    <reaction evidence="1">
        <text>precorrin-2 + NAD(+) = sirohydrochlorin + NADH + 2 H(+)</text>
        <dbReference type="Rhea" id="RHEA:15613"/>
        <dbReference type="ChEBI" id="CHEBI:15378"/>
        <dbReference type="ChEBI" id="CHEBI:57540"/>
        <dbReference type="ChEBI" id="CHEBI:57945"/>
        <dbReference type="ChEBI" id="CHEBI:58351"/>
        <dbReference type="ChEBI" id="CHEBI:58827"/>
        <dbReference type="EC" id="1.3.1.76"/>
    </reaction>
</comment>
<comment type="catalytic activity">
    <reaction evidence="1">
        <text>siroheme + 2 H(+) = sirohydrochlorin + Fe(2+)</text>
        <dbReference type="Rhea" id="RHEA:24360"/>
        <dbReference type="ChEBI" id="CHEBI:15378"/>
        <dbReference type="ChEBI" id="CHEBI:29033"/>
        <dbReference type="ChEBI" id="CHEBI:58351"/>
        <dbReference type="ChEBI" id="CHEBI:60052"/>
        <dbReference type="EC" id="4.99.1.4"/>
    </reaction>
</comment>
<comment type="pathway">
    <text evidence="1">Cofactor biosynthesis; adenosylcobalamin biosynthesis; precorrin-2 from uroporphyrinogen III: step 1/1.</text>
</comment>
<comment type="pathway">
    <text evidence="1">Cofactor biosynthesis; adenosylcobalamin biosynthesis; sirohydrochlorin from precorrin-2: step 1/1.</text>
</comment>
<comment type="pathway">
    <text evidence="1">Porphyrin-containing compound metabolism; siroheme biosynthesis; precorrin-2 from uroporphyrinogen III: step 1/1.</text>
</comment>
<comment type="pathway">
    <text evidence="1">Porphyrin-containing compound metabolism; siroheme biosynthesis; siroheme from sirohydrochlorin: step 1/1.</text>
</comment>
<comment type="pathway">
    <text evidence="1">Porphyrin-containing compound metabolism; siroheme biosynthesis; sirohydrochlorin from precorrin-2: step 1/1.</text>
</comment>
<comment type="similarity">
    <text evidence="1">In the N-terminal section; belongs to the precorrin-2 dehydrogenase / sirohydrochlorin ferrochelatase family.</text>
</comment>
<comment type="similarity">
    <text evidence="1">In the C-terminal section; belongs to the precorrin methyltransferase family.</text>
</comment>
<dbReference type="EC" id="2.1.1.107" evidence="1"/>
<dbReference type="EC" id="1.3.1.76" evidence="1"/>
<dbReference type="EC" id="4.99.1.4" evidence="1"/>
<dbReference type="EMBL" id="CP000388">
    <property type="protein sequence ID" value="ABG38947.1"/>
    <property type="molecule type" value="Genomic_DNA"/>
</dbReference>
<dbReference type="RefSeq" id="WP_011573344.1">
    <property type="nucleotide sequence ID" value="NC_008228.1"/>
</dbReference>
<dbReference type="SMR" id="Q15YU1"/>
<dbReference type="STRING" id="342610.Patl_0417"/>
<dbReference type="KEGG" id="pat:Patl_0417"/>
<dbReference type="eggNOG" id="COG0007">
    <property type="taxonomic scope" value="Bacteria"/>
</dbReference>
<dbReference type="eggNOG" id="COG1648">
    <property type="taxonomic scope" value="Bacteria"/>
</dbReference>
<dbReference type="HOGENOM" id="CLU_011276_2_1_6"/>
<dbReference type="OrthoDB" id="9815856at2"/>
<dbReference type="UniPathway" id="UPA00148">
    <property type="reaction ID" value="UER00211"/>
</dbReference>
<dbReference type="UniPathway" id="UPA00148">
    <property type="reaction ID" value="UER00222"/>
</dbReference>
<dbReference type="UniPathway" id="UPA00262">
    <property type="reaction ID" value="UER00211"/>
</dbReference>
<dbReference type="UniPathway" id="UPA00262">
    <property type="reaction ID" value="UER00222"/>
</dbReference>
<dbReference type="UniPathway" id="UPA00262">
    <property type="reaction ID" value="UER00376"/>
</dbReference>
<dbReference type="Proteomes" id="UP000001981">
    <property type="component" value="Chromosome"/>
</dbReference>
<dbReference type="GO" id="GO:0051287">
    <property type="term" value="F:NAD binding"/>
    <property type="evidence" value="ECO:0007669"/>
    <property type="project" value="InterPro"/>
</dbReference>
<dbReference type="GO" id="GO:0043115">
    <property type="term" value="F:precorrin-2 dehydrogenase activity"/>
    <property type="evidence" value="ECO:0007669"/>
    <property type="project" value="UniProtKB-UniRule"/>
</dbReference>
<dbReference type="GO" id="GO:0051266">
    <property type="term" value="F:sirohydrochlorin ferrochelatase activity"/>
    <property type="evidence" value="ECO:0007669"/>
    <property type="project" value="UniProtKB-EC"/>
</dbReference>
<dbReference type="GO" id="GO:0004851">
    <property type="term" value="F:uroporphyrin-III C-methyltransferase activity"/>
    <property type="evidence" value="ECO:0007669"/>
    <property type="project" value="UniProtKB-UniRule"/>
</dbReference>
<dbReference type="GO" id="GO:0009236">
    <property type="term" value="P:cobalamin biosynthetic process"/>
    <property type="evidence" value="ECO:0007669"/>
    <property type="project" value="UniProtKB-UniRule"/>
</dbReference>
<dbReference type="GO" id="GO:0032259">
    <property type="term" value="P:methylation"/>
    <property type="evidence" value="ECO:0007669"/>
    <property type="project" value="UniProtKB-KW"/>
</dbReference>
<dbReference type="GO" id="GO:0019354">
    <property type="term" value="P:siroheme biosynthetic process"/>
    <property type="evidence" value="ECO:0007669"/>
    <property type="project" value="UniProtKB-UniRule"/>
</dbReference>
<dbReference type="CDD" id="cd11642">
    <property type="entry name" value="SUMT"/>
    <property type="match status" value="1"/>
</dbReference>
<dbReference type="FunFam" id="3.30.950.10:FF:000001">
    <property type="entry name" value="Siroheme synthase"/>
    <property type="match status" value="1"/>
</dbReference>
<dbReference type="FunFam" id="3.40.1010.10:FF:000001">
    <property type="entry name" value="Siroheme synthase"/>
    <property type="match status" value="1"/>
</dbReference>
<dbReference type="Gene3D" id="3.40.1010.10">
    <property type="entry name" value="Cobalt-precorrin-4 Transmethylase, Domain 1"/>
    <property type="match status" value="1"/>
</dbReference>
<dbReference type="Gene3D" id="3.30.950.10">
    <property type="entry name" value="Methyltransferase, Cobalt-precorrin-4 Transmethylase, Domain 2"/>
    <property type="match status" value="1"/>
</dbReference>
<dbReference type="Gene3D" id="3.40.50.720">
    <property type="entry name" value="NAD(P)-binding Rossmann-like Domain"/>
    <property type="match status" value="1"/>
</dbReference>
<dbReference type="Gene3D" id="1.10.8.210">
    <property type="entry name" value="Sirohaem synthase, dimerisation domain"/>
    <property type="match status" value="1"/>
</dbReference>
<dbReference type="Gene3D" id="3.30.160.110">
    <property type="entry name" value="Siroheme synthase, domain 2"/>
    <property type="match status" value="1"/>
</dbReference>
<dbReference type="HAMAP" id="MF_01646">
    <property type="entry name" value="Siroheme_synth"/>
    <property type="match status" value="1"/>
</dbReference>
<dbReference type="InterPro" id="IPR000878">
    <property type="entry name" value="4pyrrol_Mease"/>
</dbReference>
<dbReference type="InterPro" id="IPR035996">
    <property type="entry name" value="4pyrrol_Methylase_sf"/>
</dbReference>
<dbReference type="InterPro" id="IPR014777">
    <property type="entry name" value="4pyrrole_Mease_sub1"/>
</dbReference>
<dbReference type="InterPro" id="IPR014776">
    <property type="entry name" value="4pyrrole_Mease_sub2"/>
</dbReference>
<dbReference type="InterPro" id="IPR006366">
    <property type="entry name" value="CobA/CysG_C"/>
</dbReference>
<dbReference type="InterPro" id="IPR036291">
    <property type="entry name" value="NAD(P)-bd_dom_sf"/>
</dbReference>
<dbReference type="InterPro" id="IPR050161">
    <property type="entry name" value="Siro_Cobalamin_biosynth"/>
</dbReference>
<dbReference type="InterPro" id="IPR037115">
    <property type="entry name" value="Sirohaem_synt_dimer_dom_sf"/>
</dbReference>
<dbReference type="InterPro" id="IPR012409">
    <property type="entry name" value="Sirohaem_synth"/>
</dbReference>
<dbReference type="InterPro" id="IPR019478">
    <property type="entry name" value="Sirohaem_synthase_dimer_dom"/>
</dbReference>
<dbReference type="InterPro" id="IPR006367">
    <property type="entry name" value="Sirohaem_synthase_N"/>
</dbReference>
<dbReference type="InterPro" id="IPR003043">
    <property type="entry name" value="Uropor_MeTrfase_CS"/>
</dbReference>
<dbReference type="NCBIfam" id="TIGR01469">
    <property type="entry name" value="cobA_cysG_Cterm"/>
    <property type="match status" value="1"/>
</dbReference>
<dbReference type="NCBIfam" id="TIGR01470">
    <property type="entry name" value="cysG_Nterm"/>
    <property type="match status" value="1"/>
</dbReference>
<dbReference type="NCBIfam" id="NF004790">
    <property type="entry name" value="PRK06136.1"/>
    <property type="match status" value="1"/>
</dbReference>
<dbReference type="NCBIfam" id="NF007922">
    <property type="entry name" value="PRK10637.1"/>
    <property type="match status" value="1"/>
</dbReference>
<dbReference type="PANTHER" id="PTHR45790:SF1">
    <property type="entry name" value="SIROHEME SYNTHASE"/>
    <property type="match status" value="1"/>
</dbReference>
<dbReference type="PANTHER" id="PTHR45790">
    <property type="entry name" value="SIROHEME SYNTHASE-RELATED"/>
    <property type="match status" value="1"/>
</dbReference>
<dbReference type="Pfam" id="PF10414">
    <property type="entry name" value="CysG_dimeriser"/>
    <property type="match status" value="1"/>
</dbReference>
<dbReference type="Pfam" id="PF13241">
    <property type="entry name" value="NAD_binding_7"/>
    <property type="match status" value="1"/>
</dbReference>
<dbReference type="Pfam" id="PF00590">
    <property type="entry name" value="TP_methylase"/>
    <property type="match status" value="1"/>
</dbReference>
<dbReference type="PIRSF" id="PIRSF036426">
    <property type="entry name" value="Sirohaem_synth"/>
    <property type="match status" value="1"/>
</dbReference>
<dbReference type="SUPFAM" id="SSF51735">
    <property type="entry name" value="NAD(P)-binding Rossmann-fold domains"/>
    <property type="match status" value="1"/>
</dbReference>
<dbReference type="SUPFAM" id="SSF75615">
    <property type="entry name" value="Siroheme synthase middle domains-like"/>
    <property type="match status" value="1"/>
</dbReference>
<dbReference type="SUPFAM" id="SSF53790">
    <property type="entry name" value="Tetrapyrrole methylase"/>
    <property type="match status" value="1"/>
</dbReference>
<dbReference type="PROSITE" id="PS00840">
    <property type="entry name" value="SUMT_2"/>
    <property type="match status" value="1"/>
</dbReference>
<organism>
    <name type="scientific">Pseudoalteromonas atlantica (strain T6c / ATCC BAA-1087)</name>
    <dbReference type="NCBI Taxonomy" id="3042615"/>
    <lineage>
        <taxon>Bacteria</taxon>
        <taxon>Pseudomonadati</taxon>
        <taxon>Pseudomonadota</taxon>
        <taxon>Gammaproteobacteria</taxon>
        <taxon>Alteromonadales</taxon>
        <taxon>Alteromonadaceae</taxon>
        <taxon>Paraglaciecola</taxon>
    </lineage>
</organism>
<proteinExistence type="inferred from homology"/>
<protein>
    <recommendedName>
        <fullName evidence="1">Siroheme synthase</fullName>
    </recommendedName>
    <domain>
        <recommendedName>
            <fullName evidence="1">Uroporphyrinogen-III C-methyltransferase</fullName>
            <shortName evidence="1">Urogen III methylase</shortName>
            <ecNumber evidence="1">2.1.1.107</ecNumber>
        </recommendedName>
        <alternativeName>
            <fullName evidence="1">SUMT</fullName>
        </alternativeName>
        <alternativeName>
            <fullName evidence="1">Uroporphyrinogen III methylase</fullName>
            <shortName evidence="1">UROM</shortName>
        </alternativeName>
    </domain>
    <domain>
        <recommendedName>
            <fullName evidence="1">Precorrin-2 dehydrogenase</fullName>
            <ecNumber evidence="1">1.3.1.76</ecNumber>
        </recommendedName>
    </domain>
    <domain>
        <recommendedName>
            <fullName evidence="1">Sirohydrochlorin ferrochelatase</fullName>
            <ecNumber evidence="1">4.99.1.4</ecNumber>
        </recommendedName>
    </domain>
</protein>
<gene>
    <name evidence="1" type="primary">cysG</name>
    <name type="ordered locus">Patl_0417</name>
</gene>
<evidence type="ECO:0000255" key="1">
    <source>
        <dbReference type="HAMAP-Rule" id="MF_01646"/>
    </source>
</evidence>
<name>CYSG_PSEA6</name>
<feature type="chain" id="PRO_0000330531" description="Siroheme synthase">
    <location>
        <begin position="1"/>
        <end position="462"/>
    </location>
</feature>
<feature type="region of interest" description="Precorrin-2 dehydrogenase /sirohydrochlorin ferrochelatase" evidence="1">
    <location>
        <begin position="1"/>
        <end position="203"/>
    </location>
</feature>
<feature type="region of interest" description="Uroporphyrinogen-III C-methyltransferase" evidence="1">
    <location>
        <begin position="217"/>
        <end position="462"/>
    </location>
</feature>
<feature type="active site" description="Proton acceptor" evidence="1">
    <location>
        <position position="249"/>
    </location>
</feature>
<feature type="active site" description="Proton donor" evidence="1">
    <location>
        <position position="271"/>
    </location>
</feature>
<feature type="binding site" evidence="1">
    <location>
        <begin position="22"/>
        <end position="23"/>
    </location>
    <ligand>
        <name>NAD(+)</name>
        <dbReference type="ChEBI" id="CHEBI:57540"/>
    </ligand>
</feature>
<feature type="binding site" evidence="1">
    <location>
        <begin position="43"/>
        <end position="44"/>
    </location>
    <ligand>
        <name>NAD(+)</name>
        <dbReference type="ChEBI" id="CHEBI:57540"/>
    </ligand>
</feature>
<feature type="binding site" evidence="1">
    <location>
        <position position="226"/>
    </location>
    <ligand>
        <name>S-adenosyl-L-methionine</name>
        <dbReference type="ChEBI" id="CHEBI:59789"/>
    </ligand>
</feature>
<feature type="binding site" evidence="1">
    <location>
        <begin position="302"/>
        <end position="304"/>
    </location>
    <ligand>
        <name>S-adenosyl-L-methionine</name>
        <dbReference type="ChEBI" id="CHEBI:59789"/>
    </ligand>
</feature>
<feature type="binding site" evidence="1">
    <location>
        <position position="307"/>
    </location>
    <ligand>
        <name>S-adenosyl-L-methionine</name>
        <dbReference type="ChEBI" id="CHEBI:59789"/>
    </ligand>
</feature>
<feature type="binding site" evidence="1">
    <location>
        <begin position="332"/>
        <end position="333"/>
    </location>
    <ligand>
        <name>S-adenosyl-L-methionine</name>
        <dbReference type="ChEBI" id="CHEBI:59789"/>
    </ligand>
</feature>
<feature type="binding site" evidence="1">
    <location>
        <position position="384"/>
    </location>
    <ligand>
        <name>S-adenosyl-L-methionine</name>
        <dbReference type="ChEBI" id="CHEBI:59789"/>
    </ligand>
</feature>
<feature type="binding site" evidence="1">
    <location>
        <position position="413"/>
    </location>
    <ligand>
        <name>S-adenosyl-L-methionine</name>
        <dbReference type="ChEBI" id="CHEBI:59789"/>
    </ligand>
</feature>
<feature type="modified residue" description="Phosphoserine" evidence="1">
    <location>
        <position position="128"/>
    </location>
</feature>